<keyword id="KW-0004">4Fe-4S</keyword>
<keyword id="KW-0012">Acyltransferase</keyword>
<keyword id="KW-0963">Cytoplasm</keyword>
<keyword id="KW-0206">Cytoskeleton</keyword>
<keyword id="KW-0408">Iron</keyword>
<keyword id="KW-0411">Iron-sulfur</keyword>
<keyword id="KW-0479">Metal-binding</keyword>
<keyword id="KW-0493">Microtubule</keyword>
<keyword id="KW-0539">Nucleus</keyword>
<keyword id="KW-1185">Reference proteome</keyword>
<keyword id="KW-0694">RNA-binding</keyword>
<keyword id="KW-0949">S-adenosyl-L-methionine</keyword>
<keyword id="KW-0808">Transferase</keyword>
<keyword id="KW-0819">tRNA processing</keyword>
<keyword id="KW-0820">tRNA-binding</keyword>
<name>ELP3_DROME</name>
<organism evidence="14">
    <name type="scientific">Drosophila melanogaster</name>
    <name type="common">Fruit fly</name>
    <dbReference type="NCBI Taxonomy" id="7227"/>
    <lineage>
        <taxon>Eukaryota</taxon>
        <taxon>Metazoa</taxon>
        <taxon>Ecdysozoa</taxon>
        <taxon>Arthropoda</taxon>
        <taxon>Hexapoda</taxon>
        <taxon>Insecta</taxon>
        <taxon>Pterygota</taxon>
        <taxon>Neoptera</taxon>
        <taxon>Endopterygota</taxon>
        <taxon>Diptera</taxon>
        <taxon>Brachycera</taxon>
        <taxon>Muscomorpha</taxon>
        <taxon>Ephydroidea</taxon>
        <taxon>Drosophilidae</taxon>
        <taxon>Drosophila</taxon>
        <taxon>Sophophora</taxon>
    </lineage>
</organism>
<dbReference type="EC" id="2.3.1.311" evidence="10"/>
<dbReference type="EMBL" id="AE014134">
    <property type="protein sequence ID" value="AAF51012.1"/>
    <property type="molecule type" value="Genomic_DNA"/>
</dbReference>
<dbReference type="EMBL" id="AY089621">
    <property type="protein sequence ID" value="AAL90359.1"/>
    <property type="molecule type" value="mRNA"/>
</dbReference>
<dbReference type="RefSeq" id="NP_608834.1">
    <property type="nucleotide sequence ID" value="NM_134990.3"/>
</dbReference>
<dbReference type="SMR" id="Q9VQZ6"/>
<dbReference type="BioGRID" id="59843">
    <property type="interactions" value="6"/>
</dbReference>
<dbReference type="ComplexPortal" id="CPX-10346">
    <property type="entry name" value="Elongator holoenzyme complex"/>
</dbReference>
<dbReference type="FunCoup" id="Q9VQZ6">
    <property type="interactions" value="2152"/>
</dbReference>
<dbReference type="IntAct" id="Q9VQZ6">
    <property type="interactions" value="3"/>
</dbReference>
<dbReference type="STRING" id="7227.FBpp0077129"/>
<dbReference type="PaxDb" id="7227-FBpp0077129"/>
<dbReference type="DNASU" id="33649"/>
<dbReference type="EnsemblMetazoa" id="FBtr0077439">
    <property type="protein sequence ID" value="FBpp0077129"/>
    <property type="gene ID" value="FBgn0031604"/>
</dbReference>
<dbReference type="GeneID" id="33649"/>
<dbReference type="KEGG" id="dme:Dmel_CG15433"/>
<dbReference type="UCSC" id="CG15433-RA">
    <property type="organism name" value="d. melanogaster"/>
</dbReference>
<dbReference type="AGR" id="FB:FBgn0031604"/>
<dbReference type="CTD" id="55140"/>
<dbReference type="FlyBase" id="FBgn0031604">
    <property type="gene designation" value="Elp3"/>
</dbReference>
<dbReference type="VEuPathDB" id="VectorBase:FBgn0031604"/>
<dbReference type="eggNOG" id="KOG2535">
    <property type="taxonomic scope" value="Eukaryota"/>
</dbReference>
<dbReference type="GeneTree" id="ENSGT00390000013141"/>
<dbReference type="HOGENOM" id="CLU_025983_2_1_1"/>
<dbReference type="InParanoid" id="Q9VQZ6"/>
<dbReference type="OMA" id="TFETRPD"/>
<dbReference type="OrthoDB" id="10265243at2759"/>
<dbReference type="PhylomeDB" id="Q9VQZ6"/>
<dbReference type="BRENDA" id="2.3.1.48">
    <property type="organism ID" value="1994"/>
</dbReference>
<dbReference type="SignaLink" id="Q9VQZ6"/>
<dbReference type="UniPathway" id="UPA00988"/>
<dbReference type="BioGRID-ORCS" id="33649">
    <property type="hits" value="1 hit in 1 CRISPR screen"/>
</dbReference>
<dbReference type="GenomeRNAi" id="33649"/>
<dbReference type="PRO" id="PR:Q9VQZ6"/>
<dbReference type="Proteomes" id="UP000000803">
    <property type="component" value="Chromosome 2L"/>
</dbReference>
<dbReference type="Bgee" id="FBgn0031604">
    <property type="expression patterns" value="Expressed in egg chamber and 65 other cell types or tissues"/>
</dbReference>
<dbReference type="GO" id="GO:0005737">
    <property type="term" value="C:cytoplasm"/>
    <property type="evidence" value="ECO:0000314"/>
    <property type="project" value="UniProtKB"/>
</dbReference>
<dbReference type="GO" id="GO:0005829">
    <property type="term" value="C:cytosol"/>
    <property type="evidence" value="ECO:0000314"/>
    <property type="project" value="FlyBase"/>
</dbReference>
<dbReference type="GO" id="GO:0033588">
    <property type="term" value="C:elongator holoenzyme complex"/>
    <property type="evidence" value="ECO:0000314"/>
    <property type="project" value="FlyBase"/>
</dbReference>
<dbReference type="GO" id="GO:0005874">
    <property type="term" value="C:microtubule"/>
    <property type="evidence" value="ECO:0007669"/>
    <property type="project" value="UniProtKB-KW"/>
</dbReference>
<dbReference type="GO" id="GO:0005634">
    <property type="term" value="C:nucleus"/>
    <property type="evidence" value="ECO:0000250"/>
    <property type="project" value="FlyBase"/>
</dbReference>
<dbReference type="GO" id="GO:0005819">
    <property type="term" value="C:spindle"/>
    <property type="evidence" value="ECO:0007669"/>
    <property type="project" value="UniProtKB-SubCell"/>
</dbReference>
<dbReference type="GO" id="GO:0045202">
    <property type="term" value="C:synapse"/>
    <property type="evidence" value="ECO:0000314"/>
    <property type="project" value="FlyBase"/>
</dbReference>
<dbReference type="GO" id="GO:0051539">
    <property type="term" value="F:4 iron, 4 sulfur cluster binding"/>
    <property type="evidence" value="ECO:0007669"/>
    <property type="project" value="UniProtKB-KW"/>
</dbReference>
<dbReference type="GO" id="GO:0016407">
    <property type="term" value="F:acetyltransferase activity"/>
    <property type="evidence" value="ECO:0000315"/>
    <property type="project" value="FlyBase"/>
</dbReference>
<dbReference type="GO" id="GO:0046872">
    <property type="term" value="F:metal ion binding"/>
    <property type="evidence" value="ECO:0007669"/>
    <property type="project" value="UniProtKB-KW"/>
</dbReference>
<dbReference type="GO" id="GO:0008607">
    <property type="term" value="F:phosphorylase kinase regulator activity"/>
    <property type="evidence" value="ECO:0000250"/>
    <property type="project" value="UniProtKB"/>
</dbReference>
<dbReference type="GO" id="GO:0061733">
    <property type="term" value="F:protein-lysine-acetyltransferase activity"/>
    <property type="evidence" value="ECO:0000314"/>
    <property type="project" value="FlyBase"/>
</dbReference>
<dbReference type="GO" id="GO:0000049">
    <property type="term" value="F:tRNA binding"/>
    <property type="evidence" value="ECO:0007669"/>
    <property type="project" value="UniProtKB-KW"/>
</dbReference>
<dbReference type="GO" id="GO:0106261">
    <property type="term" value="F:tRNA uridine(34) acetyltransferase activity"/>
    <property type="evidence" value="ECO:0000250"/>
    <property type="project" value="FlyBase"/>
</dbReference>
<dbReference type="GO" id="GO:0048789">
    <property type="term" value="P:cytoskeletal matrix organization at active zone"/>
    <property type="evidence" value="ECO:0000315"/>
    <property type="project" value="FlyBase"/>
</dbReference>
<dbReference type="GO" id="GO:0061867">
    <property type="term" value="P:establishment of mitotic spindle asymmetry"/>
    <property type="evidence" value="ECO:0000314"/>
    <property type="project" value="FlyBase"/>
</dbReference>
<dbReference type="GO" id="GO:0030097">
    <property type="term" value="P:hemopoiesis"/>
    <property type="evidence" value="ECO:0000315"/>
    <property type="project" value="FlyBase"/>
</dbReference>
<dbReference type="GO" id="GO:0002168">
    <property type="term" value="P:instar larval development"/>
    <property type="evidence" value="ECO:0000315"/>
    <property type="project" value="FlyBase"/>
</dbReference>
<dbReference type="GO" id="GO:0007626">
    <property type="term" value="P:locomotory behavior"/>
    <property type="evidence" value="ECO:0000315"/>
    <property type="project" value="FlyBase"/>
</dbReference>
<dbReference type="GO" id="GO:0007616">
    <property type="term" value="P:long-term memory"/>
    <property type="evidence" value="ECO:0000315"/>
    <property type="project" value="UniProtKB"/>
</dbReference>
<dbReference type="GO" id="GO:2000289">
    <property type="term" value="P:regulation of photoreceptor cell axon guidance"/>
    <property type="evidence" value="ECO:0000315"/>
    <property type="project" value="FlyBase"/>
</dbReference>
<dbReference type="GO" id="GO:0006357">
    <property type="term" value="P:regulation of transcription by RNA polymerase II"/>
    <property type="evidence" value="ECO:0000250"/>
    <property type="project" value="UniProtKB"/>
</dbReference>
<dbReference type="GO" id="GO:0030431">
    <property type="term" value="P:sleep"/>
    <property type="evidence" value="ECO:0000315"/>
    <property type="project" value="FlyBase"/>
</dbReference>
<dbReference type="GO" id="GO:0050808">
    <property type="term" value="P:synapse organization"/>
    <property type="evidence" value="ECO:0000315"/>
    <property type="project" value="FlyBase"/>
</dbReference>
<dbReference type="GO" id="GO:0051124">
    <property type="term" value="P:synaptic assembly at neuromuscular junction"/>
    <property type="evidence" value="ECO:0000315"/>
    <property type="project" value="FlyBase"/>
</dbReference>
<dbReference type="GO" id="GO:0006400">
    <property type="term" value="P:tRNA modification"/>
    <property type="evidence" value="ECO:0000315"/>
    <property type="project" value="FlyBase"/>
</dbReference>
<dbReference type="GO" id="GO:0002926">
    <property type="term" value="P:tRNA wobble base 5-methoxycarbonylmethyl-2-thiouridinylation"/>
    <property type="evidence" value="ECO:0000318"/>
    <property type="project" value="GO_Central"/>
</dbReference>
<dbReference type="GO" id="GO:0002098">
    <property type="term" value="P:tRNA wobble uridine modification"/>
    <property type="evidence" value="ECO:0000250"/>
    <property type="project" value="FlyBase"/>
</dbReference>
<dbReference type="CDD" id="cd01335">
    <property type="entry name" value="Radical_SAM"/>
    <property type="match status" value="1"/>
</dbReference>
<dbReference type="FunFam" id="3.40.630.30:FF:000003">
    <property type="entry name" value="Elongator complex protein 3"/>
    <property type="match status" value="1"/>
</dbReference>
<dbReference type="Gene3D" id="3.40.630.30">
    <property type="match status" value="1"/>
</dbReference>
<dbReference type="InterPro" id="IPR016181">
    <property type="entry name" value="Acyl_CoA_acyltransferase"/>
</dbReference>
<dbReference type="InterPro" id="IPR039661">
    <property type="entry name" value="ELP3"/>
</dbReference>
<dbReference type="InterPro" id="IPR034687">
    <property type="entry name" value="ELP3-like"/>
</dbReference>
<dbReference type="InterPro" id="IPR056591">
    <property type="entry name" value="ELP3-like_N"/>
</dbReference>
<dbReference type="InterPro" id="IPR006638">
    <property type="entry name" value="Elp3/MiaA/NifB-like_rSAM"/>
</dbReference>
<dbReference type="InterPro" id="IPR000182">
    <property type="entry name" value="GNAT_dom"/>
</dbReference>
<dbReference type="InterPro" id="IPR032432">
    <property type="entry name" value="Radical_SAM_C"/>
</dbReference>
<dbReference type="InterPro" id="IPR007197">
    <property type="entry name" value="rSAM"/>
</dbReference>
<dbReference type="NCBIfam" id="TIGR01211">
    <property type="entry name" value="ELP3"/>
    <property type="match status" value="1"/>
</dbReference>
<dbReference type="PANTHER" id="PTHR11135:SF0">
    <property type="entry name" value="ELONGATOR COMPLEX PROTEIN 3"/>
    <property type="match status" value="1"/>
</dbReference>
<dbReference type="PANTHER" id="PTHR11135">
    <property type="entry name" value="HISTONE ACETYLTRANSFERASE-RELATED"/>
    <property type="match status" value="1"/>
</dbReference>
<dbReference type="Pfam" id="PF23613">
    <property type="entry name" value="ELP3_N"/>
    <property type="match status" value="1"/>
</dbReference>
<dbReference type="Pfam" id="PF04055">
    <property type="entry name" value="Radical_SAM"/>
    <property type="match status" value="1"/>
</dbReference>
<dbReference type="Pfam" id="PF16199">
    <property type="entry name" value="Radical_SAM_C"/>
    <property type="match status" value="1"/>
</dbReference>
<dbReference type="PIRSF" id="PIRSF005669">
    <property type="entry name" value="Hist_AcTrfase_ELP3"/>
    <property type="match status" value="1"/>
</dbReference>
<dbReference type="SFLD" id="SFLDG01086">
    <property type="entry name" value="elongater_protein-like"/>
    <property type="match status" value="1"/>
</dbReference>
<dbReference type="SFLD" id="SFLDF00344">
    <property type="entry name" value="ELP3-like"/>
    <property type="match status" value="1"/>
</dbReference>
<dbReference type="SMART" id="SM00729">
    <property type="entry name" value="Elp3"/>
    <property type="match status" value="1"/>
</dbReference>
<dbReference type="SUPFAM" id="SSF55729">
    <property type="entry name" value="Acyl-CoA N-acyltransferases (Nat)"/>
    <property type="match status" value="1"/>
</dbReference>
<dbReference type="SUPFAM" id="SSF102114">
    <property type="entry name" value="Radical SAM enzymes"/>
    <property type="match status" value="1"/>
</dbReference>
<dbReference type="PROSITE" id="PS51186">
    <property type="entry name" value="GNAT"/>
    <property type="match status" value="1"/>
</dbReference>
<dbReference type="PROSITE" id="PS51918">
    <property type="entry name" value="RADICAL_SAM"/>
    <property type="match status" value="1"/>
</dbReference>
<sequence length="552" mass="62821">MKAKKKLGVGLSRQERQVLVIGEIIQELLKAHEAKKDVNLNRMKSLVASKYGLDSSPRLVDIIAAVPQDAKKILLPKLRAKPIRTASGIAVVAVMCKPHRCPHINMTGNICVYCPGGPDSDFEYSTQSYTGYEPTSMRAIRSRYDPFLQTRHRVEQLKQLGHSVDKVEFIVMGGTFMCLPEEYRDYFIRNLHDALSGHSSANVAEAVRYSEKSRTKCIGITIETRPDYCLKRHISDMLSYGCTRLEIGVQSVYEDVARDTNRGHTVRAVCESFQLGKDAGYKIVTHMMPDLPNVDFERDIEQFIEYFENPAFRSDGLKIYPTLVIRGTGLYELWKTGRYKSYPPSMLVDLVAKILALVPPWTRVYRVQRDIPMPLVSSGVEHGNLRELALARMKDLGTTCRDVRTREVGIQEIHNKVRPYEIELIRRDYVANGGWETFLSYEDPEQDILVGLLRLRKCSPDTFRPELKGECSIVRELHVYGSVVPVNARDPTKFQHQGFGMLLMEEAERIAREEHGSTKLAVISGVGTRNYYRKMGYQLDGPYMSKSIEENN</sequence>
<comment type="function">
    <text evidence="2 4 7 8 9 10">Catalytic tRNA acetyltransferase subunit of the elongator complex, which is required for multiple tRNA modifications, including mcm5U (5-methoxycarbonylmethyl uridine), mcm5s2U (5-methoxycarbonylmethyl-2-thiouridine), and ncm5U (5-carbamoylmethyl uridine) (PubMed:36302967). In the elongator complex, acts as a tRNA uridine(34) acetyltransferase by mediating formation of carboxymethyluridine in the wobble base at position 34 in tRNAs (PubMed:36302967). Binding by the elongator complex stabilizes microtubules and promotes their growth (PubMed:36302967). This induces central spindle asymmetry, promoting polarized signaling endosome trafficking during asymmetric cell division and cell fate assignation of sensory organ precursor cells (PubMed:36302967). Plays a role in the control of synaptic bouton expansion (PubMed:20626565). Required for larval development (PubMed:21288872). Involved in protein synthesis-dependent long-term memory formation, probably as part of the elongator complex (PubMed:29545390).</text>
</comment>
<comment type="catalytic activity">
    <reaction evidence="10">
        <text>uridine(34) in tRNA + acetyl-CoA + S-adenosyl-L-methionine + H2O = 5-(carboxymethyl)uridine(34) in tRNA + 5'-deoxyadenosine + L-methionine + CoA + 2 H(+)</text>
        <dbReference type="Rhea" id="RHEA:61020"/>
        <dbReference type="Rhea" id="RHEA-COMP:10407"/>
        <dbReference type="Rhea" id="RHEA-COMP:11727"/>
        <dbReference type="ChEBI" id="CHEBI:15377"/>
        <dbReference type="ChEBI" id="CHEBI:15378"/>
        <dbReference type="ChEBI" id="CHEBI:17319"/>
        <dbReference type="ChEBI" id="CHEBI:57287"/>
        <dbReference type="ChEBI" id="CHEBI:57288"/>
        <dbReference type="ChEBI" id="CHEBI:57844"/>
        <dbReference type="ChEBI" id="CHEBI:59789"/>
        <dbReference type="ChEBI" id="CHEBI:65315"/>
        <dbReference type="ChEBI" id="CHEBI:74882"/>
        <dbReference type="EC" id="2.3.1.311"/>
    </reaction>
    <physiologicalReaction direction="left-to-right" evidence="10">
        <dbReference type="Rhea" id="RHEA:61021"/>
    </physiologicalReaction>
</comment>
<comment type="cofactor">
    <cofactor evidence="3">
        <name>[4Fe-4S] cluster</name>
        <dbReference type="ChEBI" id="CHEBI:49883"/>
    </cofactor>
    <text evidence="3">Binds 1 [4Fe-4S] cluster. The cluster is coordinated with 3 cysteines and an exchangeable S-adenosyl-L-methionine.</text>
</comment>
<comment type="pathway">
    <text evidence="4">tRNA modification; 5-methoxycarbonylmethyl-2-thiouridine-tRNA biosynthesis.</text>
</comment>
<comment type="subunit">
    <text evidence="10">Component of the elongator complex composed of Elp1, Elp2, Elp3, Elp4, Elp5 and Elp6 (PubMed:36302967). The elongator complex associates with and stabilizes microtubules; efficient interaction requires the full complex (PubMed:36302967).</text>
</comment>
<comment type="subcellular location">
    <subcellularLocation>
        <location evidence="9">Cytoplasm</location>
    </subcellularLocation>
    <subcellularLocation>
        <location evidence="4">Nucleus</location>
    </subcellularLocation>
    <subcellularLocation>
        <location evidence="12">Cytoplasm</location>
        <location evidence="12">Cytoskeleton</location>
        <location evidence="12">Spindle</location>
    </subcellularLocation>
    <text evidence="10">During asymmetric cell division of sensory organ precursor cells the elongator complex preferentially binds and stabilizes microtubules on the anterior side (pIIb daughter cell) of the spindle.</text>
</comment>
<comment type="disruption phenotype">
    <text evidence="7 8 9 10">Pronounced larval developmental delay and death at the pupal stage with delayed and reduced ecdysone-induced transcription, developmental of melanotic nodules and up-regulation of stress-induced genes (PubMed:21288872). RNAi-mediated knockdown results in lethality at larval third instar or the late pupal stage (PubMed:20626565, PubMed:36302967). RNAi-mediated knockdown in sensory organ precursor cells abolishes central spindle asymmetry during asymmetric cell division (PubMed:36302967). RNAi-mediated knockdown in the central nervous system results in a hyperactive phenotype, sleep loss in adult females, a significant expansion in synaptic bouton number in the larval neuromuscular junction (NMJ), increased larval NMJ axonal length and branching, and misregulation of genes known to be involved in these processes with a marked increase in Hsc70-3 and Syb mRNA levels and a marked decrease in qvr/sss mRNA levels (PubMed:20626565). RNAi-mediated knockdown in hemocytes results in reduced hemocyte numbers and hemocyte aggregation (PubMed:21288872). RNAi-mediated knockdown in adult mushroom body neurons impairs protein synthesis-dependent long-term memory formation (PubMed:29545390).</text>
</comment>
<comment type="similarity">
    <text evidence="11">Belongs to the ELP3 family.</text>
</comment>
<comment type="caution">
    <text evidence="4">The elongator complex was originally thought to play a role in transcription elongation. However, it is no longer thought to play a direct role in this process and its primary function is thought to be in tRNA modification.</text>
</comment>
<feature type="chain" id="PRO_0000283992" description="Elongator complex protein 3">
    <location>
        <begin position="1"/>
        <end position="552"/>
    </location>
</feature>
<feature type="domain" description="Radical SAM core" evidence="6">
    <location>
        <begin position="84"/>
        <end position="374"/>
    </location>
</feature>
<feature type="domain" description="N-acetyltransferase" evidence="5">
    <location>
        <begin position="398"/>
        <end position="552"/>
    </location>
</feature>
<feature type="binding site" evidence="3">
    <location>
        <position position="101"/>
    </location>
    <ligand>
        <name>[4Fe-4S] cluster</name>
        <dbReference type="ChEBI" id="CHEBI:49883"/>
        <note>4Fe-4S-S-AdoMet</note>
    </ligand>
</feature>
<feature type="binding site" evidence="3">
    <location>
        <position position="111"/>
    </location>
    <ligand>
        <name>[4Fe-4S] cluster</name>
        <dbReference type="ChEBI" id="CHEBI:49883"/>
        <note>4Fe-4S-S-AdoMet</note>
    </ligand>
</feature>
<feature type="binding site" evidence="3">
    <location>
        <position position="114"/>
    </location>
    <ligand>
        <name>[4Fe-4S] cluster</name>
        <dbReference type="ChEBI" id="CHEBI:49883"/>
        <note>4Fe-4S-S-AdoMet</note>
    </ligand>
</feature>
<feature type="binding site" evidence="1">
    <location>
        <position position="166"/>
    </location>
    <ligand>
        <name>acetyl-CoA</name>
        <dbReference type="ChEBI" id="CHEBI:57288"/>
    </ligand>
</feature>
<feature type="binding site" evidence="1">
    <location>
        <begin position="476"/>
        <end position="479"/>
    </location>
    <ligand>
        <name>acetyl-CoA</name>
        <dbReference type="ChEBI" id="CHEBI:57288"/>
    </ligand>
</feature>
<feature type="binding site" evidence="1">
    <location>
        <begin position="499"/>
        <end position="501"/>
    </location>
    <ligand>
        <name>acetyl-CoA</name>
        <dbReference type="ChEBI" id="CHEBI:57288"/>
    </ligand>
</feature>
<feature type="binding site" evidence="1">
    <location>
        <position position="532"/>
    </location>
    <ligand>
        <name>acetyl-CoA</name>
        <dbReference type="ChEBI" id="CHEBI:57288"/>
    </ligand>
</feature>
<feature type="mutagenesis site" description="Loss of tRNA modifying activity. No effect on elongator complex formation or tRNA substrate binding. Able to rescue the loss of spindle asymmetry phenotype but not the pupal lethal phenotype of Elp3 depletion." evidence="10">
    <original>YY</original>
    <variation>AA</variation>
    <location>
        <begin position="531"/>
        <end position="532"/>
    </location>
</feature>
<feature type="mutagenesis site" description="Embryonic lethality. Able to rescue the loss of spindle asymmetry phenotype." evidence="8 10">
    <original>Y</original>
    <variation>F</variation>
    <location>
        <position position="531"/>
    </location>
</feature>
<protein>
    <recommendedName>
        <fullName evidence="11">Elongator complex protein 3</fullName>
        <ecNumber evidence="10">2.3.1.311</ecNumber>
    </recommendedName>
    <alternativeName>
        <fullName evidence="11">tRNA uridine(34) acetyltransferase</fullName>
    </alternativeName>
</protein>
<reference key="1">
    <citation type="journal article" date="2000" name="Science">
        <title>The genome sequence of Drosophila melanogaster.</title>
        <authorList>
            <person name="Adams M.D."/>
            <person name="Celniker S.E."/>
            <person name="Holt R.A."/>
            <person name="Evans C.A."/>
            <person name="Gocayne J.D."/>
            <person name="Amanatides P.G."/>
            <person name="Scherer S.E."/>
            <person name="Li P.W."/>
            <person name="Hoskins R.A."/>
            <person name="Galle R.F."/>
            <person name="George R.A."/>
            <person name="Lewis S.E."/>
            <person name="Richards S."/>
            <person name="Ashburner M."/>
            <person name="Henderson S.N."/>
            <person name="Sutton G.G."/>
            <person name="Wortman J.R."/>
            <person name="Yandell M.D."/>
            <person name="Zhang Q."/>
            <person name="Chen L.X."/>
            <person name="Brandon R.C."/>
            <person name="Rogers Y.-H.C."/>
            <person name="Blazej R.G."/>
            <person name="Champe M."/>
            <person name="Pfeiffer B.D."/>
            <person name="Wan K.H."/>
            <person name="Doyle C."/>
            <person name="Baxter E.G."/>
            <person name="Helt G."/>
            <person name="Nelson C.R."/>
            <person name="Miklos G.L.G."/>
            <person name="Abril J.F."/>
            <person name="Agbayani A."/>
            <person name="An H.-J."/>
            <person name="Andrews-Pfannkoch C."/>
            <person name="Baldwin D."/>
            <person name="Ballew R.M."/>
            <person name="Basu A."/>
            <person name="Baxendale J."/>
            <person name="Bayraktaroglu L."/>
            <person name="Beasley E.M."/>
            <person name="Beeson K.Y."/>
            <person name="Benos P.V."/>
            <person name="Berman B.P."/>
            <person name="Bhandari D."/>
            <person name="Bolshakov S."/>
            <person name="Borkova D."/>
            <person name="Botchan M.R."/>
            <person name="Bouck J."/>
            <person name="Brokstein P."/>
            <person name="Brottier P."/>
            <person name="Burtis K.C."/>
            <person name="Busam D.A."/>
            <person name="Butler H."/>
            <person name="Cadieu E."/>
            <person name="Center A."/>
            <person name="Chandra I."/>
            <person name="Cherry J.M."/>
            <person name="Cawley S."/>
            <person name="Dahlke C."/>
            <person name="Davenport L.B."/>
            <person name="Davies P."/>
            <person name="de Pablos B."/>
            <person name="Delcher A."/>
            <person name="Deng Z."/>
            <person name="Mays A.D."/>
            <person name="Dew I."/>
            <person name="Dietz S.M."/>
            <person name="Dodson K."/>
            <person name="Doup L.E."/>
            <person name="Downes M."/>
            <person name="Dugan-Rocha S."/>
            <person name="Dunkov B.C."/>
            <person name="Dunn P."/>
            <person name="Durbin K.J."/>
            <person name="Evangelista C.C."/>
            <person name="Ferraz C."/>
            <person name="Ferriera S."/>
            <person name="Fleischmann W."/>
            <person name="Fosler C."/>
            <person name="Gabrielian A.E."/>
            <person name="Garg N.S."/>
            <person name="Gelbart W.M."/>
            <person name="Glasser K."/>
            <person name="Glodek A."/>
            <person name="Gong F."/>
            <person name="Gorrell J.H."/>
            <person name="Gu Z."/>
            <person name="Guan P."/>
            <person name="Harris M."/>
            <person name="Harris N.L."/>
            <person name="Harvey D.A."/>
            <person name="Heiman T.J."/>
            <person name="Hernandez J.R."/>
            <person name="Houck J."/>
            <person name="Hostin D."/>
            <person name="Houston K.A."/>
            <person name="Howland T.J."/>
            <person name="Wei M.-H."/>
            <person name="Ibegwam C."/>
            <person name="Jalali M."/>
            <person name="Kalush F."/>
            <person name="Karpen G.H."/>
            <person name="Ke Z."/>
            <person name="Kennison J.A."/>
            <person name="Ketchum K.A."/>
            <person name="Kimmel B.E."/>
            <person name="Kodira C.D."/>
            <person name="Kraft C.L."/>
            <person name="Kravitz S."/>
            <person name="Kulp D."/>
            <person name="Lai Z."/>
            <person name="Lasko P."/>
            <person name="Lei Y."/>
            <person name="Levitsky A.A."/>
            <person name="Li J.H."/>
            <person name="Li Z."/>
            <person name="Liang Y."/>
            <person name="Lin X."/>
            <person name="Liu X."/>
            <person name="Mattei B."/>
            <person name="McIntosh T.C."/>
            <person name="McLeod M.P."/>
            <person name="McPherson D."/>
            <person name="Merkulov G."/>
            <person name="Milshina N.V."/>
            <person name="Mobarry C."/>
            <person name="Morris J."/>
            <person name="Moshrefi A."/>
            <person name="Mount S.M."/>
            <person name="Moy M."/>
            <person name="Murphy B."/>
            <person name="Murphy L."/>
            <person name="Muzny D.M."/>
            <person name="Nelson D.L."/>
            <person name="Nelson D.R."/>
            <person name="Nelson K.A."/>
            <person name="Nixon K."/>
            <person name="Nusskern D.R."/>
            <person name="Pacleb J.M."/>
            <person name="Palazzolo M."/>
            <person name="Pittman G.S."/>
            <person name="Pan S."/>
            <person name="Pollard J."/>
            <person name="Puri V."/>
            <person name="Reese M.G."/>
            <person name="Reinert K."/>
            <person name="Remington K."/>
            <person name="Saunders R.D.C."/>
            <person name="Scheeler F."/>
            <person name="Shen H."/>
            <person name="Shue B.C."/>
            <person name="Siden-Kiamos I."/>
            <person name="Simpson M."/>
            <person name="Skupski M.P."/>
            <person name="Smith T.J."/>
            <person name="Spier E."/>
            <person name="Spradling A.C."/>
            <person name="Stapleton M."/>
            <person name="Strong R."/>
            <person name="Sun E."/>
            <person name="Svirskas R."/>
            <person name="Tector C."/>
            <person name="Turner R."/>
            <person name="Venter E."/>
            <person name="Wang A.H."/>
            <person name="Wang X."/>
            <person name="Wang Z.-Y."/>
            <person name="Wassarman D.A."/>
            <person name="Weinstock G.M."/>
            <person name="Weissenbach J."/>
            <person name="Williams S.M."/>
            <person name="Woodage T."/>
            <person name="Worley K.C."/>
            <person name="Wu D."/>
            <person name="Yang S."/>
            <person name="Yao Q.A."/>
            <person name="Ye J."/>
            <person name="Yeh R.-F."/>
            <person name="Zaveri J.S."/>
            <person name="Zhan M."/>
            <person name="Zhang G."/>
            <person name="Zhao Q."/>
            <person name="Zheng L."/>
            <person name="Zheng X.H."/>
            <person name="Zhong F.N."/>
            <person name="Zhong W."/>
            <person name="Zhou X."/>
            <person name="Zhu S.C."/>
            <person name="Zhu X."/>
            <person name="Smith H.O."/>
            <person name="Gibbs R.A."/>
            <person name="Myers E.W."/>
            <person name="Rubin G.M."/>
            <person name="Venter J.C."/>
        </authorList>
    </citation>
    <scope>NUCLEOTIDE SEQUENCE [LARGE SCALE GENOMIC DNA]</scope>
    <source>
        <strain>Berkeley</strain>
    </source>
</reference>
<reference key="2">
    <citation type="journal article" date="2002" name="Genome Biol.">
        <title>Annotation of the Drosophila melanogaster euchromatic genome: a systematic review.</title>
        <authorList>
            <person name="Misra S."/>
            <person name="Crosby M.A."/>
            <person name="Mungall C.J."/>
            <person name="Matthews B.B."/>
            <person name="Campbell K.S."/>
            <person name="Hradecky P."/>
            <person name="Huang Y."/>
            <person name="Kaminker J.S."/>
            <person name="Millburn G.H."/>
            <person name="Prochnik S.E."/>
            <person name="Smith C.D."/>
            <person name="Tupy J.L."/>
            <person name="Whitfield E.J."/>
            <person name="Bayraktaroglu L."/>
            <person name="Berman B.P."/>
            <person name="Bettencourt B.R."/>
            <person name="Celniker S.E."/>
            <person name="de Grey A.D.N.J."/>
            <person name="Drysdale R.A."/>
            <person name="Harris N.L."/>
            <person name="Richter J."/>
            <person name="Russo S."/>
            <person name="Schroeder A.J."/>
            <person name="Shu S.Q."/>
            <person name="Stapleton M."/>
            <person name="Yamada C."/>
            <person name="Ashburner M."/>
            <person name="Gelbart W.M."/>
            <person name="Rubin G.M."/>
            <person name="Lewis S.E."/>
        </authorList>
    </citation>
    <scope>GENOME REANNOTATION</scope>
    <source>
        <strain>Berkeley</strain>
    </source>
</reference>
<reference key="3">
    <citation type="journal article" date="2002" name="Genome Biol.">
        <title>A Drosophila full-length cDNA resource.</title>
        <authorList>
            <person name="Stapleton M."/>
            <person name="Carlson J.W."/>
            <person name="Brokstein P."/>
            <person name="Yu C."/>
            <person name="Champe M."/>
            <person name="George R.A."/>
            <person name="Guarin H."/>
            <person name="Kronmiller B."/>
            <person name="Pacleb J.M."/>
            <person name="Park S."/>
            <person name="Wan K.H."/>
            <person name="Rubin G.M."/>
            <person name="Celniker S.E."/>
        </authorList>
    </citation>
    <scope>NUCLEOTIDE SEQUENCE [LARGE SCALE MRNA]</scope>
    <source>
        <strain>Berkeley</strain>
        <tissue>Embryo</tissue>
    </source>
</reference>
<reference key="4">
    <citation type="journal article" date="2010" name="J. Neurochem.">
        <title>The histone acetyltransferase Elp3 plays in active role in the control of synaptic bouton expansion and sleep in Drosophila.</title>
        <authorList>
            <person name="Singh N."/>
            <person name="Lorbeck M.T."/>
            <person name="Zervos A."/>
            <person name="Zimmerman J."/>
            <person name="Elefant F."/>
        </authorList>
    </citation>
    <scope>FUNCTION</scope>
    <scope>DISRUPTION PHENOTYPE</scope>
</reference>
<reference key="5">
    <citation type="journal article" date="2011" name="Genetics">
        <title>Role of elongator subunit Elp3 in Drosophila melanogaster larval development and immunity.</title>
        <authorList>
            <person name="Walker J."/>
            <person name="Kwon S.Y."/>
            <person name="Badenhorst P."/>
            <person name="East P."/>
            <person name="McNeill H."/>
            <person name="Svejstrup J.Q."/>
        </authorList>
    </citation>
    <scope>FUNCTION</scope>
    <scope>DISRUPTION PHENOTYPE</scope>
    <scope>MUTAGENESIS OF TYR-531</scope>
</reference>
<reference key="6">
    <citation type="journal article" date="2018" name="Learn. Memory">
        <title>Elongator complex is required for long-term olfactory memory formation in Drosophila.</title>
        <authorList>
            <person name="Yu D."/>
            <person name="Tan Y."/>
            <person name="Chakraborty M."/>
            <person name="Tomchik S."/>
            <person name="Davis R.L."/>
        </authorList>
    </citation>
    <scope>FUNCTION</scope>
    <scope>SUBCELLULAR LOCATION</scope>
    <scope>DISRUPTION PHENOTYPE</scope>
</reference>
<reference key="7">
    <citation type="journal article" date="2022" name="Nat. Cell Biol.">
        <title>Elongator stabilizes microtubules to control central spindle asymmetry and polarized trafficking of cell fate determinants.</title>
        <authorList>
            <person name="Planelles-Herrero V.J."/>
            <person name="Bittleston A."/>
            <person name="Seum C."/>
            <person name="Daeden A."/>
            <person name="Gaitan M.G."/>
            <person name="Derivery E."/>
        </authorList>
    </citation>
    <scope>FUNCTION</scope>
    <scope>CATALYTIC ACTIVITY</scope>
    <scope>IDENTIFICATION IN THE ELONGATOR COMPLEX</scope>
    <scope>INTERACTION WITH MICROTUBULES</scope>
    <scope>SUBCELLULAR LOCATION</scope>
    <scope>DISRUPTION PHENOTYPE</scope>
    <scope>IDENTIFICATION BY MASS SPECTROMETRY</scope>
    <scope>MUTAGENESIS OF 531-TYR-TYR-532</scope>
    <scope>CHARACTERIZATION</scope>
</reference>
<gene>
    <name evidence="13" type="primary">Elp3</name>
    <name evidence="13" type="ORF">CG15433</name>
</gene>
<evidence type="ECO:0000250" key="1">
    <source>
        <dbReference type="UniProtKB" id="A0A1C7D1B7"/>
    </source>
</evidence>
<evidence type="ECO:0000250" key="2">
    <source>
        <dbReference type="UniProtKB" id="D5VRB9"/>
    </source>
</evidence>
<evidence type="ECO:0000250" key="3">
    <source>
        <dbReference type="UniProtKB" id="Q02908"/>
    </source>
</evidence>
<evidence type="ECO:0000250" key="4">
    <source>
        <dbReference type="UniProtKB" id="Q9H9T3"/>
    </source>
</evidence>
<evidence type="ECO:0000255" key="5">
    <source>
        <dbReference type="PROSITE-ProRule" id="PRU00532"/>
    </source>
</evidence>
<evidence type="ECO:0000255" key="6">
    <source>
        <dbReference type="PROSITE-ProRule" id="PRU01266"/>
    </source>
</evidence>
<evidence type="ECO:0000269" key="7">
    <source>
    </source>
</evidence>
<evidence type="ECO:0000269" key="8">
    <source>
    </source>
</evidence>
<evidence type="ECO:0000269" key="9">
    <source>
    </source>
</evidence>
<evidence type="ECO:0000269" key="10">
    <source>
    </source>
</evidence>
<evidence type="ECO:0000305" key="11"/>
<evidence type="ECO:0000305" key="12">
    <source>
    </source>
</evidence>
<evidence type="ECO:0000312" key="13">
    <source>
        <dbReference type="FlyBase" id="FBgn0031604"/>
    </source>
</evidence>
<evidence type="ECO:0000312" key="14">
    <source>
        <dbReference type="Proteomes" id="UP000000803"/>
    </source>
</evidence>
<accession>Q9VQZ6</accession>
<proteinExistence type="evidence at protein level"/>